<accession>B1Z0E2</accession>
<feature type="chain" id="PRO_1000129736" description="Argininosuccinate synthase">
    <location>
        <begin position="1"/>
        <end position="445"/>
    </location>
</feature>
<feature type="binding site" evidence="1">
    <location>
        <begin position="17"/>
        <end position="25"/>
    </location>
    <ligand>
        <name>ATP</name>
        <dbReference type="ChEBI" id="CHEBI:30616"/>
    </ligand>
</feature>
<feature type="binding site" evidence="1">
    <location>
        <position position="43"/>
    </location>
    <ligand>
        <name>ATP</name>
        <dbReference type="ChEBI" id="CHEBI:30616"/>
    </ligand>
</feature>
<feature type="binding site" evidence="1">
    <location>
        <position position="99"/>
    </location>
    <ligand>
        <name>L-citrulline</name>
        <dbReference type="ChEBI" id="CHEBI:57743"/>
    </ligand>
</feature>
<feature type="binding site" evidence="1">
    <location>
        <position position="129"/>
    </location>
    <ligand>
        <name>ATP</name>
        <dbReference type="ChEBI" id="CHEBI:30616"/>
    </ligand>
</feature>
<feature type="binding site" evidence="1">
    <location>
        <position position="131"/>
    </location>
    <ligand>
        <name>ATP</name>
        <dbReference type="ChEBI" id="CHEBI:30616"/>
    </ligand>
</feature>
<feature type="binding site" evidence="1">
    <location>
        <position position="131"/>
    </location>
    <ligand>
        <name>L-aspartate</name>
        <dbReference type="ChEBI" id="CHEBI:29991"/>
    </ligand>
</feature>
<feature type="binding site" evidence="1">
    <location>
        <position position="135"/>
    </location>
    <ligand>
        <name>L-aspartate</name>
        <dbReference type="ChEBI" id="CHEBI:29991"/>
    </ligand>
</feature>
<feature type="binding site" evidence="1">
    <location>
        <position position="135"/>
    </location>
    <ligand>
        <name>L-citrulline</name>
        <dbReference type="ChEBI" id="CHEBI:57743"/>
    </ligand>
</feature>
<feature type="binding site" evidence="1">
    <location>
        <position position="136"/>
    </location>
    <ligand>
        <name>ATP</name>
        <dbReference type="ChEBI" id="CHEBI:30616"/>
    </ligand>
</feature>
<feature type="binding site" evidence="1">
    <location>
        <position position="136"/>
    </location>
    <ligand>
        <name>L-aspartate</name>
        <dbReference type="ChEBI" id="CHEBI:29991"/>
    </ligand>
</feature>
<feature type="binding site" evidence="1">
    <location>
        <position position="139"/>
    </location>
    <ligand>
        <name>L-citrulline</name>
        <dbReference type="ChEBI" id="CHEBI:57743"/>
    </ligand>
</feature>
<feature type="binding site" evidence="1">
    <location>
        <position position="192"/>
    </location>
    <ligand>
        <name>L-citrulline</name>
        <dbReference type="ChEBI" id="CHEBI:57743"/>
    </ligand>
</feature>
<feature type="binding site" evidence="1">
    <location>
        <position position="194"/>
    </location>
    <ligand>
        <name>ATP</name>
        <dbReference type="ChEBI" id="CHEBI:30616"/>
    </ligand>
</feature>
<feature type="binding site" evidence="1">
    <location>
        <position position="201"/>
    </location>
    <ligand>
        <name>L-citrulline</name>
        <dbReference type="ChEBI" id="CHEBI:57743"/>
    </ligand>
</feature>
<feature type="binding site" evidence="1">
    <location>
        <position position="203"/>
    </location>
    <ligand>
        <name>L-citrulline</name>
        <dbReference type="ChEBI" id="CHEBI:57743"/>
    </ligand>
</feature>
<feature type="binding site" evidence="1">
    <location>
        <position position="280"/>
    </location>
    <ligand>
        <name>L-citrulline</name>
        <dbReference type="ChEBI" id="CHEBI:57743"/>
    </ligand>
</feature>
<organism>
    <name type="scientific">Burkholderia ambifaria (strain MC40-6)</name>
    <dbReference type="NCBI Taxonomy" id="398577"/>
    <lineage>
        <taxon>Bacteria</taxon>
        <taxon>Pseudomonadati</taxon>
        <taxon>Pseudomonadota</taxon>
        <taxon>Betaproteobacteria</taxon>
        <taxon>Burkholderiales</taxon>
        <taxon>Burkholderiaceae</taxon>
        <taxon>Burkholderia</taxon>
        <taxon>Burkholderia cepacia complex</taxon>
    </lineage>
</organism>
<comment type="catalytic activity">
    <reaction evidence="1">
        <text>L-citrulline + L-aspartate + ATP = 2-(N(omega)-L-arginino)succinate + AMP + diphosphate + H(+)</text>
        <dbReference type="Rhea" id="RHEA:10932"/>
        <dbReference type="ChEBI" id="CHEBI:15378"/>
        <dbReference type="ChEBI" id="CHEBI:29991"/>
        <dbReference type="ChEBI" id="CHEBI:30616"/>
        <dbReference type="ChEBI" id="CHEBI:33019"/>
        <dbReference type="ChEBI" id="CHEBI:57472"/>
        <dbReference type="ChEBI" id="CHEBI:57743"/>
        <dbReference type="ChEBI" id="CHEBI:456215"/>
        <dbReference type="EC" id="6.3.4.5"/>
    </reaction>
</comment>
<comment type="pathway">
    <text evidence="1">Amino-acid biosynthesis; L-arginine biosynthesis; L-arginine from L-ornithine and carbamoyl phosphate: step 2/3.</text>
</comment>
<comment type="subunit">
    <text evidence="1">Homotetramer.</text>
</comment>
<comment type="subcellular location">
    <subcellularLocation>
        <location evidence="1">Cytoplasm</location>
    </subcellularLocation>
</comment>
<comment type="similarity">
    <text evidence="1">Belongs to the argininosuccinate synthase family. Type 2 subfamily.</text>
</comment>
<keyword id="KW-0028">Amino-acid biosynthesis</keyword>
<keyword id="KW-0055">Arginine biosynthesis</keyword>
<keyword id="KW-0067">ATP-binding</keyword>
<keyword id="KW-0963">Cytoplasm</keyword>
<keyword id="KW-0436">Ligase</keyword>
<keyword id="KW-0547">Nucleotide-binding</keyword>
<name>ASSY_BURA4</name>
<protein>
    <recommendedName>
        <fullName evidence="1">Argininosuccinate synthase</fullName>
        <ecNumber evidence="1">6.3.4.5</ecNumber>
    </recommendedName>
    <alternativeName>
        <fullName evidence="1">Citrulline--aspartate ligase</fullName>
    </alternativeName>
</protein>
<sequence length="445" mass="49192">MSTILESLPTGQKVGIAFSGGLDTSAALHWMKLKGAVPYAYTANLGQPDEDDYDAIPKRAIEYGAAGARLIDCRAQLVAEGIAALQSGAFHITTAGVTYFNTTPIGRAVTGTMLVAAMKEDGVNIWGDGSTYKGNDIERFYRYGLLVNPDLKIYKPWLDQTFIDELGGRAEMSEFMNQAGFAYKMSAEKAYSTDSNLLGATHEAKDLESLESGIKIVNPIMGVAFWRDDVKIAAEEVTVRFEAGQPVALNGVEFKDPVELLLEANRIGGRHGLGMSDQIENRIIEAKSRGIYEAPGLALLYIAYERLVTGIHNEDTIEQYRENGRRLGRLLYQGRWFDPQAIMLRETAQRWVARAITGEVKIELRRGNDYSILSTKSPNLTYQPERLSMEKVASTFSPRDRIGQLTMRNLDITDTRDKLRVYSQVGLLTPGESSALPQIKGDDGK</sequence>
<gene>
    <name evidence="1" type="primary">argG</name>
    <name type="ordered locus">BamMC406_3596</name>
</gene>
<reference key="1">
    <citation type="submission" date="2008-04" db="EMBL/GenBank/DDBJ databases">
        <title>Complete sequence of chromosome 2 of Burkholderia ambifaria MC40-6.</title>
        <authorList>
            <person name="Copeland A."/>
            <person name="Lucas S."/>
            <person name="Lapidus A."/>
            <person name="Glavina del Rio T."/>
            <person name="Dalin E."/>
            <person name="Tice H."/>
            <person name="Pitluck S."/>
            <person name="Chain P."/>
            <person name="Malfatti S."/>
            <person name="Shin M."/>
            <person name="Vergez L."/>
            <person name="Lang D."/>
            <person name="Schmutz J."/>
            <person name="Larimer F."/>
            <person name="Land M."/>
            <person name="Hauser L."/>
            <person name="Kyrpides N."/>
            <person name="Lykidis A."/>
            <person name="Ramette A."/>
            <person name="Konstantinidis K."/>
            <person name="Tiedje J."/>
            <person name="Richardson P."/>
        </authorList>
    </citation>
    <scope>NUCLEOTIDE SEQUENCE [LARGE SCALE GENOMIC DNA]</scope>
    <source>
        <strain>MC40-6</strain>
    </source>
</reference>
<dbReference type="EC" id="6.3.4.5" evidence="1"/>
<dbReference type="EMBL" id="CP001026">
    <property type="protein sequence ID" value="ACB66063.1"/>
    <property type="molecule type" value="Genomic_DNA"/>
</dbReference>
<dbReference type="RefSeq" id="WP_012365474.1">
    <property type="nucleotide sequence ID" value="NC_010552.1"/>
</dbReference>
<dbReference type="SMR" id="B1Z0E2"/>
<dbReference type="KEGG" id="bac:BamMC406_3596"/>
<dbReference type="HOGENOM" id="CLU_032784_4_1_4"/>
<dbReference type="OrthoDB" id="9801641at2"/>
<dbReference type="UniPathway" id="UPA00068">
    <property type="reaction ID" value="UER00113"/>
</dbReference>
<dbReference type="Proteomes" id="UP000001680">
    <property type="component" value="Chromosome 2"/>
</dbReference>
<dbReference type="GO" id="GO:0005737">
    <property type="term" value="C:cytoplasm"/>
    <property type="evidence" value="ECO:0007669"/>
    <property type="project" value="UniProtKB-SubCell"/>
</dbReference>
<dbReference type="GO" id="GO:0004055">
    <property type="term" value="F:argininosuccinate synthase activity"/>
    <property type="evidence" value="ECO:0007669"/>
    <property type="project" value="UniProtKB-UniRule"/>
</dbReference>
<dbReference type="GO" id="GO:0005524">
    <property type="term" value="F:ATP binding"/>
    <property type="evidence" value="ECO:0007669"/>
    <property type="project" value="UniProtKB-UniRule"/>
</dbReference>
<dbReference type="GO" id="GO:0042803">
    <property type="term" value="F:protein homodimerization activity"/>
    <property type="evidence" value="ECO:0007669"/>
    <property type="project" value="InterPro"/>
</dbReference>
<dbReference type="GO" id="GO:0000053">
    <property type="term" value="P:argininosuccinate metabolic process"/>
    <property type="evidence" value="ECO:0007669"/>
    <property type="project" value="TreeGrafter"/>
</dbReference>
<dbReference type="GO" id="GO:0006526">
    <property type="term" value="P:L-arginine biosynthetic process"/>
    <property type="evidence" value="ECO:0007669"/>
    <property type="project" value="UniProtKB-UniRule"/>
</dbReference>
<dbReference type="GO" id="GO:0000050">
    <property type="term" value="P:urea cycle"/>
    <property type="evidence" value="ECO:0007669"/>
    <property type="project" value="TreeGrafter"/>
</dbReference>
<dbReference type="CDD" id="cd01999">
    <property type="entry name" value="ASS"/>
    <property type="match status" value="1"/>
</dbReference>
<dbReference type="FunFam" id="1.10.287.400:FF:000001">
    <property type="entry name" value="Argininosuccinate synthase"/>
    <property type="match status" value="1"/>
</dbReference>
<dbReference type="Gene3D" id="1.10.287.400">
    <property type="match status" value="1"/>
</dbReference>
<dbReference type="Gene3D" id="3.90.1260.10">
    <property type="entry name" value="Argininosuccinate synthetase, chain A, domain 2"/>
    <property type="match status" value="1"/>
</dbReference>
<dbReference type="Gene3D" id="3.40.50.620">
    <property type="entry name" value="HUPs"/>
    <property type="match status" value="1"/>
</dbReference>
<dbReference type="HAMAP" id="MF_00581">
    <property type="entry name" value="Arg_succ_synth_type2"/>
    <property type="match status" value="1"/>
</dbReference>
<dbReference type="InterPro" id="IPR023437">
    <property type="entry name" value="Arg_succ_synth_type2_subfam"/>
</dbReference>
<dbReference type="InterPro" id="IPR048268">
    <property type="entry name" value="Arginosuc_syn_C"/>
</dbReference>
<dbReference type="InterPro" id="IPR048267">
    <property type="entry name" value="Arginosuc_syn_N"/>
</dbReference>
<dbReference type="InterPro" id="IPR001518">
    <property type="entry name" value="Arginosuc_synth"/>
</dbReference>
<dbReference type="InterPro" id="IPR018223">
    <property type="entry name" value="Arginosuc_synth_CS"/>
</dbReference>
<dbReference type="InterPro" id="IPR023434">
    <property type="entry name" value="Arginosuc_synth_type_1_subfam"/>
</dbReference>
<dbReference type="InterPro" id="IPR024074">
    <property type="entry name" value="AS_cat/multimer_dom_body"/>
</dbReference>
<dbReference type="InterPro" id="IPR024073">
    <property type="entry name" value="AS_multimer_C_tail"/>
</dbReference>
<dbReference type="InterPro" id="IPR014729">
    <property type="entry name" value="Rossmann-like_a/b/a_fold"/>
</dbReference>
<dbReference type="NCBIfam" id="TIGR00032">
    <property type="entry name" value="argG"/>
    <property type="match status" value="1"/>
</dbReference>
<dbReference type="NCBIfam" id="NF003779">
    <property type="entry name" value="PRK05370.1"/>
    <property type="match status" value="1"/>
</dbReference>
<dbReference type="PANTHER" id="PTHR11587">
    <property type="entry name" value="ARGININOSUCCINATE SYNTHASE"/>
    <property type="match status" value="1"/>
</dbReference>
<dbReference type="PANTHER" id="PTHR11587:SF2">
    <property type="entry name" value="ARGININOSUCCINATE SYNTHASE"/>
    <property type="match status" value="1"/>
</dbReference>
<dbReference type="Pfam" id="PF20979">
    <property type="entry name" value="Arginosuc_syn_C"/>
    <property type="match status" value="1"/>
</dbReference>
<dbReference type="Pfam" id="PF00764">
    <property type="entry name" value="Arginosuc_synth"/>
    <property type="match status" value="1"/>
</dbReference>
<dbReference type="SUPFAM" id="SSF52402">
    <property type="entry name" value="Adenine nucleotide alpha hydrolases-like"/>
    <property type="match status" value="1"/>
</dbReference>
<dbReference type="SUPFAM" id="SSF69864">
    <property type="entry name" value="Argininosuccinate synthetase, C-terminal domain"/>
    <property type="match status" value="1"/>
</dbReference>
<dbReference type="PROSITE" id="PS00564">
    <property type="entry name" value="ARGININOSUCCIN_SYN_1"/>
    <property type="match status" value="1"/>
</dbReference>
<dbReference type="PROSITE" id="PS00565">
    <property type="entry name" value="ARGININOSUCCIN_SYN_2"/>
    <property type="match status" value="1"/>
</dbReference>
<proteinExistence type="inferred from homology"/>
<evidence type="ECO:0000255" key="1">
    <source>
        <dbReference type="HAMAP-Rule" id="MF_00581"/>
    </source>
</evidence>